<feature type="signal peptide" evidence="1">
    <location>
        <begin position="1"/>
        <end position="21"/>
    </location>
</feature>
<feature type="chain" id="PRO_0000000871" description="F1845 fimbrial protein">
    <location>
        <begin position="22"/>
        <end position="159"/>
    </location>
</feature>
<feature type="strand" evidence="3">
    <location>
        <begin position="23"/>
        <end position="37"/>
    </location>
</feature>
<feature type="strand" evidence="3">
    <location>
        <begin position="39"/>
        <end position="46"/>
    </location>
</feature>
<feature type="strand" evidence="3">
    <location>
        <begin position="50"/>
        <end position="52"/>
    </location>
</feature>
<feature type="helix" evidence="3">
    <location>
        <begin position="53"/>
        <end position="55"/>
    </location>
</feature>
<feature type="strand" evidence="3">
    <location>
        <begin position="61"/>
        <end position="71"/>
    </location>
</feature>
<feature type="strand" evidence="3">
    <location>
        <begin position="75"/>
        <end position="81"/>
    </location>
</feature>
<feature type="helix" evidence="3">
    <location>
        <begin position="83"/>
        <end position="85"/>
    </location>
</feature>
<feature type="strand" evidence="3">
    <location>
        <begin position="91"/>
        <end position="94"/>
    </location>
</feature>
<feature type="strand" evidence="3">
    <location>
        <begin position="100"/>
        <end position="107"/>
    </location>
</feature>
<feature type="strand" evidence="3">
    <location>
        <begin position="113"/>
        <end position="116"/>
    </location>
</feature>
<feature type="strand" evidence="3">
    <location>
        <begin position="119"/>
        <end position="124"/>
    </location>
</feature>
<feature type="strand" evidence="3">
    <location>
        <begin position="128"/>
        <end position="136"/>
    </location>
</feature>
<feature type="strand" evidence="3">
    <location>
        <begin position="145"/>
        <end position="157"/>
    </location>
</feature>
<keyword id="KW-0002">3D-structure</keyword>
<keyword id="KW-0281">Fimbrium</keyword>
<keyword id="KW-0732">Signal</keyword>
<protein>
    <recommendedName>
        <fullName>F1845 fimbrial protein</fullName>
    </recommendedName>
    <alternativeName>
        <fullName>Fimbrial adhesin F1845 antigen</fullName>
    </alternativeName>
</protein>
<organism>
    <name type="scientific">Escherichia coli</name>
    <dbReference type="NCBI Taxonomy" id="562"/>
    <lineage>
        <taxon>Bacteria</taxon>
        <taxon>Pseudomonadati</taxon>
        <taxon>Pseudomonadota</taxon>
        <taxon>Gammaproteobacteria</taxon>
        <taxon>Enterobacterales</taxon>
        <taxon>Enterobacteriaceae</taxon>
        <taxon>Escherichia</taxon>
    </lineage>
</organism>
<name>DAAE_ECOLX</name>
<comment type="function">
    <text>Hemagglutinins of uropathogenic E.coli mediate adherence to the upper urinary tract. These adhesins bind to the Dr blood group antigen and also agglutinate human erythrocytes in the presence of D-mannose (mannose-resistant hemagglutination (MRHA)). C1845 is a strain responsible for diarrheal disease.</text>
</comment>
<comment type="subcellular location">
    <subcellularLocation>
        <location>Fimbrium</location>
    </subcellularLocation>
</comment>
<comment type="similarity">
    <text evidence="2">Belongs to the Dr-adhesin family.</text>
</comment>
<dbReference type="EMBL" id="M27725">
    <property type="protein sequence ID" value="AAA23661.1"/>
    <property type="molecule type" value="Genomic_DNA"/>
</dbReference>
<dbReference type="PIR" id="A33859">
    <property type="entry name" value="A33859"/>
</dbReference>
<dbReference type="RefSeq" id="WP_063611431.1">
    <property type="nucleotide sequence ID" value="NZ_JAIQYD010000091.1"/>
</dbReference>
<dbReference type="PDB" id="2BCM">
    <property type="method" value="X-ray"/>
    <property type="resolution" value="1.48 A"/>
    <property type="chains" value="A/B/C=22-159"/>
</dbReference>
<dbReference type="PDBsum" id="2BCM"/>
<dbReference type="SMR" id="P13719"/>
<dbReference type="EvolutionaryTrace" id="P13719"/>
<dbReference type="GO" id="GO:0009289">
    <property type="term" value="C:pilus"/>
    <property type="evidence" value="ECO:0007669"/>
    <property type="project" value="UniProtKB-SubCell"/>
</dbReference>
<dbReference type="Gene3D" id="2.60.40.1570">
    <property type="entry name" value="Dr adhesin"/>
    <property type="match status" value="1"/>
</dbReference>
<dbReference type="InterPro" id="IPR006713">
    <property type="entry name" value="Adhesin_Dr"/>
</dbReference>
<dbReference type="InterPro" id="IPR021020">
    <property type="entry name" value="Adhesin_Dr_signal_peptide"/>
</dbReference>
<dbReference type="InterPro" id="IPR008966">
    <property type="entry name" value="Adhesion_dom_sf"/>
</dbReference>
<dbReference type="InterPro" id="IPR037028">
    <property type="entry name" value="Dr_adhesin_sf"/>
</dbReference>
<dbReference type="Pfam" id="PF04619">
    <property type="entry name" value="Adhesin_Dr"/>
    <property type="match status" value="1"/>
</dbReference>
<dbReference type="Pfam" id="PF12393">
    <property type="entry name" value="Dr_adhesin"/>
    <property type="match status" value="1"/>
</dbReference>
<dbReference type="SUPFAM" id="SSF49401">
    <property type="entry name" value="Bacterial adhesins"/>
    <property type="match status" value="1"/>
</dbReference>
<reference key="1">
    <citation type="journal article" date="1989" name="J. Bacteriol.">
        <title>Molecular characterization of a fimbrial adhesin, F1845, mediating diffuse adherence of diarrhea-associated Escherichia coli to HEp-2 cells.</title>
        <authorList>
            <person name="Bilge S.S."/>
            <person name="Clausen C.R."/>
            <person name="Lau W."/>
            <person name="Moseley S.L."/>
        </authorList>
    </citation>
    <scope>NUCLEOTIDE SEQUENCE [GENOMIC DNA]</scope>
    <source>
        <strain>O75:NM / C1845 / DAEC</strain>
    </source>
</reference>
<gene>
    <name type="primary">daaE</name>
</gene>
<evidence type="ECO:0000255" key="1"/>
<evidence type="ECO:0000305" key="2"/>
<evidence type="ECO:0007829" key="3">
    <source>
        <dbReference type="PDB" id="2BCM"/>
    </source>
</evidence>
<proteinExistence type="evidence at protein level"/>
<accession>P13719</accession>
<sequence length="159" mass="16722">MKKLAIMAAASMIFTVGSAQATFQASGTTGITTLTVTEECRVQVGNVTATLARSKLKDDTAIGVIGVTALGCNGLQAALQADPDNYDATNLYMTSRNHDKLNVKLKATDGSSWTYGNGVFYKTEGGNWGGHVGISVDGNQTDKPTGEYTLNLTGGYWTN</sequence>